<dbReference type="EMBL" id="CR382125">
    <property type="protein sequence ID" value="CAG99355.1"/>
    <property type="molecule type" value="Genomic_DNA"/>
</dbReference>
<dbReference type="RefSeq" id="XP_454268.1">
    <property type="nucleotide sequence ID" value="XM_454268.1"/>
</dbReference>
<dbReference type="SMR" id="Q6CP71"/>
<dbReference type="FunCoup" id="Q6CP71">
    <property type="interactions" value="255"/>
</dbReference>
<dbReference type="STRING" id="284590.Q6CP71"/>
<dbReference type="PaxDb" id="284590-Q6CP71"/>
<dbReference type="KEGG" id="kla:KLLA0_E07085g"/>
<dbReference type="eggNOG" id="KOG0284">
    <property type="taxonomic scope" value="Eukaryota"/>
</dbReference>
<dbReference type="HOGENOM" id="CLU_000288_77_0_1"/>
<dbReference type="InParanoid" id="Q6CP71"/>
<dbReference type="OMA" id="HHWDVKS"/>
<dbReference type="Proteomes" id="UP000000598">
    <property type="component" value="Chromosome E"/>
</dbReference>
<dbReference type="GO" id="GO:0005847">
    <property type="term" value="C:mRNA cleavage and polyadenylation specificity factor complex"/>
    <property type="evidence" value="ECO:0007669"/>
    <property type="project" value="TreeGrafter"/>
</dbReference>
<dbReference type="GO" id="GO:0007059">
    <property type="term" value="P:chromosome segregation"/>
    <property type="evidence" value="ECO:0007669"/>
    <property type="project" value="UniProtKB-KW"/>
</dbReference>
<dbReference type="GO" id="GO:0031124">
    <property type="term" value="P:mRNA 3'-end processing"/>
    <property type="evidence" value="ECO:0007669"/>
    <property type="project" value="InterPro"/>
</dbReference>
<dbReference type="CDD" id="cd00200">
    <property type="entry name" value="WD40"/>
    <property type="match status" value="1"/>
</dbReference>
<dbReference type="Gene3D" id="2.130.10.10">
    <property type="entry name" value="YVTN repeat-like/Quinoprotein amine dehydrogenase"/>
    <property type="match status" value="2"/>
</dbReference>
<dbReference type="InterPro" id="IPR020472">
    <property type="entry name" value="G-protein_beta_WD-40_rep"/>
</dbReference>
<dbReference type="InterPro" id="IPR045245">
    <property type="entry name" value="Pfs2-like"/>
</dbReference>
<dbReference type="InterPro" id="IPR015943">
    <property type="entry name" value="WD40/YVTN_repeat-like_dom_sf"/>
</dbReference>
<dbReference type="InterPro" id="IPR036322">
    <property type="entry name" value="WD40_repeat_dom_sf"/>
</dbReference>
<dbReference type="InterPro" id="IPR001680">
    <property type="entry name" value="WD40_rpt"/>
</dbReference>
<dbReference type="PANTHER" id="PTHR22836:SF0">
    <property type="entry name" value="PRE-MRNA 3' END PROCESSING PROTEIN WDR33"/>
    <property type="match status" value="1"/>
</dbReference>
<dbReference type="PANTHER" id="PTHR22836">
    <property type="entry name" value="WD40 REPEAT PROTEIN"/>
    <property type="match status" value="1"/>
</dbReference>
<dbReference type="Pfam" id="PF00400">
    <property type="entry name" value="WD40"/>
    <property type="match status" value="4"/>
</dbReference>
<dbReference type="PRINTS" id="PR00320">
    <property type="entry name" value="GPROTEINBRPT"/>
</dbReference>
<dbReference type="SMART" id="SM00320">
    <property type="entry name" value="WD40"/>
    <property type="match status" value="7"/>
</dbReference>
<dbReference type="SUPFAM" id="SSF50978">
    <property type="entry name" value="WD40 repeat-like"/>
    <property type="match status" value="1"/>
</dbReference>
<dbReference type="PROSITE" id="PS50082">
    <property type="entry name" value="WD_REPEATS_2"/>
    <property type="match status" value="4"/>
</dbReference>
<dbReference type="PROSITE" id="PS50294">
    <property type="entry name" value="WD_REPEATS_REGION"/>
    <property type="match status" value="1"/>
</dbReference>
<protein>
    <recommendedName>
        <fullName>Polyadenylation factor subunit 2</fullName>
    </recommendedName>
</protein>
<sequence>MDPNTEGTTTKKYTSQRRTIDISASYDRLYFLKKHGQENSSYIEAETSYNAHILPPDAYGFHGHAINTATKFTHLSSNKVKHVIPALTWTPEGRRLVVATYNGEFSLWSGSSFNFESIMQAHDSAVTVMTYSHTGDWMVSGSADGELKIWQPNFNMVKVMDQAHMECVREISFSPTDQKFVSCSDDNVLKIWNFSNGQQERVLSGHHWDVKSCDWHPKMGLIVSGSKDNLIKFWDPRSGSCVSTMLGFKHTIISTKFQPKQGNLLSVISKDKTCKVYDIRQQAKELFSVRDDVDYMTLQWHPIDETVFTVGCYDGSIKHFDLSQENQPNKPTHNIPYAHEKCVTSLAYSPIGHIMASASKDRTIRFWTRSRAVDPNAFDDPTYNNEKVNAWYFGINNNINAVRNKTEHGVALPPSEDSNNNENGDGSRSVEPERPSVSTLPGLGSGLPGLSF</sequence>
<name>PFS2_KLULA</name>
<evidence type="ECO:0000250" key="1"/>
<evidence type="ECO:0000256" key="2">
    <source>
        <dbReference type="SAM" id="MobiDB-lite"/>
    </source>
</evidence>
<proteinExistence type="inferred from homology"/>
<accession>Q6CP71</accession>
<reference key="1">
    <citation type="journal article" date="2004" name="Nature">
        <title>Genome evolution in yeasts.</title>
        <authorList>
            <person name="Dujon B."/>
            <person name="Sherman D."/>
            <person name="Fischer G."/>
            <person name="Durrens P."/>
            <person name="Casaregola S."/>
            <person name="Lafontaine I."/>
            <person name="de Montigny J."/>
            <person name="Marck C."/>
            <person name="Neuveglise C."/>
            <person name="Talla E."/>
            <person name="Goffard N."/>
            <person name="Frangeul L."/>
            <person name="Aigle M."/>
            <person name="Anthouard V."/>
            <person name="Babour A."/>
            <person name="Barbe V."/>
            <person name="Barnay S."/>
            <person name="Blanchin S."/>
            <person name="Beckerich J.-M."/>
            <person name="Beyne E."/>
            <person name="Bleykasten C."/>
            <person name="Boisrame A."/>
            <person name="Boyer J."/>
            <person name="Cattolico L."/>
            <person name="Confanioleri F."/>
            <person name="de Daruvar A."/>
            <person name="Despons L."/>
            <person name="Fabre E."/>
            <person name="Fairhead C."/>
            <person name="Ferry-Dumazet H."/>
            <person name="Groppi A."/>
            <person name="Hantraye F."/>
            <person name="Hennequin C."/>
            <person name="Jauniaux N."/>
            <person name="Joyet P."/>
            <person name="Kachouri R."/>
            <person name="Kerrest A."/>
            <person name="Koszul R."/>
            <person name="Lemaire M."/>
            <person name="Lesur I."/>
            <person name="Ma L."/>
            <person name="Muller H."/>
            <person name="Nicaud J.-M."/>
            <person name="Nikolski M."/>
            <person name="Oztas S."/>
            <person name="Ozier-Kalogeropoulos O."/>
            <person name="Pellenz S."/>
            <person name="Potier S."/>
            <person name="Richard G.-F."/>
            <person name="Straub M.-L."/>
            <person name="Suleau A."/>
            <person name="Swennen D."/>
            <person name="Tekaia F."/>
            <person name="Wesolowski-Louvel M."/>
            <person name="Westhof E."/>
            <person name="Wirth B."/>
            <person name="Zeniou-Meyer M."/>
            <person name="Zivanovic Y."/>
            <person name="Bolotin-Fukuhara M."/>
            <person name="Thierry A."/>
            <person name="Bouchier C."/>
            <person name="Caudron B."/>
            <person name="Scarpelli C."/>
            <person name="Gaillardin C."/>
            <person name="Weissenbach J."/>
            <person name="Wincker P."/>
            <person name="Souciet J.-L."/>
        </authorList>
    </citation>
    <scope>NUCLEOTIDE SEQUENCE [LARGE SCALE GENOMIC DNA]</scope>
    <source>
        <strain>ATCC 8585 / CBS 2359 / DSM 70799 / NBRC 1267 / NRRL Y-1140 / WM37</strain>
    </source>
</reference>
<gene>
    <name type="primary">PFS2</name>
    <name type="ordered locus">KLLA0E07073g</name>
</gene>
<feature type="chain" id="PRO_0000238504" description="Polyadenylation factor subunit 2">
    <location>
        <begin position="1"/>
        <end position="452"/>
    </location>
</feature>
<feature type="repeat" description="WD 1">
    <location>
        <begin position="79"/>
        <end position="118"/>
    </location>
</feature>
<feature type="repeat" description="WD 2">
    <location>
        <begin position="121"/>
        <end position="160"/>
    </location>
</feature>
<feature type="repeat" description="WD 3">
    <location>
        <begin position="163"/>
        <end position="202"/>
    </location>
</feature>
<feature type="repeat" description="WD 4">
    <location>
        <begin position="205"/>
        <end position="244"/>
    </location>
</feature>
<feature type="repeat" description="WD 5">
    <location>
        <begin position="247"/>
        <end position="287"/>
    </location>
</feature>
<feature type="repeat" description="WD 6">
    <location>
        <begin position="290"/>
        <end position="330"/>
    </location>
</feature>
<feature type="repeat" description="WD 7">
    <location>
        <begin position="338"/>
        <end position="377"/>
    </location>
</feature>
<feature type="region of interest" description="Disordered" evidence="2">
    <location>
        <begin position="409"/>
        <end position="452"/>
    </location>
</feature>
<feature type="compositionally biased region" description="Polar residues" evidence="2">
    <location>
        <begin position="416"/>
        <end position="426"/>
    </location>
</feature>
<feature type="compositionally biased region" description="Gly residues" evidence="2">
    <location>
        <begin position="443"/>
        <end position="452"/>
    </location>
</feature>
<keyword id="KW-0159">Chromosome partition</keyword>
<keyword id="KW-0507">mRNA processing</keyword>
<keyword id="KW-0539">Nucleus</keyword>
<keyword id="KW-1185">Reference proteome</keyword>
<keyword id="KW-0677">Repeat</keyword>
<keyword id="KW-0853">WD repeat</keyword>
<organism>
    <name type="scientific">Kluyveromyces lactis (strain ATCC 8585 / CBS 2359 / DSM 70799 / NBRC 1267 / NRRL Y-1140 / WM37)</name>
    <name type="common">Yeast</name>
    <name type="synonym">Candida sphaerica</name>
    <dbReference type="NCBI Taxonomy" id="284590"/>
    <lineage>
        <taxon>Eukaryota</taxon>
        <taxon>Fungi</taxon>
        <taxon>Dikarya</taxon>
        <taxon>Ascomycota</taxon>
        <taxon>Saccharomycotina</taxon>
        <taxon>Saccharomycetes</taxon>
        <taxon>Saccharomycetales</taxon>
        <taxon>Saccharomycetaceae</taxon>
        <taxon>Kluyveromyces</taxon>
    </lineage>
</organism>
<comment type="function">
    <text evidence="1">Required for 3'-end cleavage and polyadenylation of pre-mRNAs. Also involved in chromosome segregation where it has a role in chromosome attachment to the mitotic spindle (By similarity).</text>
</comment>
<comment type="subcellular location">
    <subcellularLocation>
        <location evidence="1">Nucleus</location>
    </subcellularLocation>
</comment>